<proteinExistence type="uncertain"/>
<protein>
    <recommendedName>
        <fullName>Putative phosphatidylinositol 4-kinase alpha-like protein P2</fullName>
    </recommendedName>
</protein>
<feature type="chain" id="PRO_0000321963" description="Putative phosphatidylinositol 4-kinase alpha-like protein P2">
    <location>
        <begin position="1"/>
        <end position="592"/>
    </location>
</feature>
<feature type="domain" description="PI3K/PI4K catalytic" evidence="2">
    <location>
        <begin position="275"/>
        <end position="576"/>
    </location>
</feature>
<feature type="region of interest" description="Pleckstrin homology (PH) domain conferring phosphoinositide binding specificity" evidence="1">
    <location>
        <begin position="180"/>
        <end position="318"/>
    </location>
</feature>
<feature type="region of interest" description="G-loop" evidence="2">
    <location>
        <begin position="281"/>
        <end position="287"/>
    </location>
</feature>
<feature type="region of interest" description="Catalytic loop" evidence="2">
    <location>
        <begin position="441"/>
        <end position="449"/>
    </location>
</feature>
<feature type="region of interest" description="Activation loop" evidence="2">
    <location>
        <begin position="460"/>
        <end position="484"/>
    </location>
</feature>
<feature type="splice variant" id="VSP_031848" description="In isoform 2 and isoform 3." evidence="3 4">
    <location>
        <begin position="325"/>
        <end position="344"/>
    </location>
</feature>
<feature type="splice variant" id="VSP_031849" description="In isoform 2." evidence="3">
    <original>ARYNFIRSMAAYSLLLFLLQIKDRHNGNIMLDKKGHII</original>
    <variation>VARVATGRGKSCVLHPTPATHTQPLPTPCSPQSSFVKG</variation>
    <location>
        <begin position="422"/>
        <end position="459"/>
    </location>
</feature>
<feature type="splice variant" id="VSP_031850" description="In isoform 2." evidence="3">
    <location>
        <begin position="460"/>
        <end position="592"/>
    </location>
</feature>
<feature type="splice variant" id="VSP_057629" description="In isoform 3." evidence="5">
    <original>EPGPYM</original>
    <variation>TGLAPT</variation>
    <location>
        <begin position="516"/>
        <end position="521"/>
    </location>
</feature>
<feature type="splice variant" id="VSP_057630" description="In isoform 3." evidence="5">
    <location>
        <begin position="522"/>
        <end position="592"/>
    </location>
</feature>
<feature type="sequence variant" id="VAR_039391" description="In dbSNP:rs2930770.">
    <original>E</original>
    <variation>Q</variation>
    <location>
        <position position="223"/>
    </location>
</feature>
<feature type="sequence conflict" description="In Ref. 1; CAG30264, 2; BAC86726 and 4; AAI39842/BC020225." evidence="5" ref="1 2 4">
    <original>G</original>
    <variation>E</variation>
    <location>
        <position position="201"/>
    </location>
</feature>
<feature type="sequence conflict" description="In Ref. 1; CAG30264, 2; BAC86726 and 4; AAI39842/BC020225." evidence="5" ref="1 2 4">
    <original>V</original>
    <variation>I</variation>
    <location>
        <position position="214"/>
    </location>
</feature>
<feature type="sequence conflict" description="In Ref. 1; CAG30264 and 4; AAI39842." evidence="5" ref="1 4">
    <original>M</original>
    <variation>T</variation>
    <location>
        <position position="332"/>
    </location>
</feature>
<feature type="sequence conflict" description="In Ref. 1; CAG30264 and 4; AAI39842." evidence="5" ref="1 4">
    <original>R</original>
    <variation>C</variation>
    <location>
        <position position="423"/>
    </location>
</feature>
<feature type="sequence conflict" description="In Ref. 1; CAG30264 and 4; AAI39842." evidence="5" ref="1 4">
    <original>L</original>
    <variation>F</variation>
    <location>
        <position position="546"/>
    </location>
</feature>
<comment type="alternative products">
    <event type="alternative splicing"/>
    <isoform>
        <id>A4QPH2-1</id>
        <name>1</name>
        <sequence type="displayed"/>
    </isoform>
    <isoform>
        <id>A4QPH2-2</id>
        <name>2</name>
        <sequence type="described" ref="VSP_031848 VSP_031849 VSP_031850"/>
    </isoform>
    <isoform>
        <id>A4QPH2-4</id>
        <name>3</name>
        <sequence type="described" ref="VSP_031848 VSP_057629 VSP_057630"/>
    </isoform>
</comment>
<comment type="similarity">
    <text evidence="5">Belongs to the PI3/PI4-kinase family. Type III PI4K subfamily.</text>
</comment>
<comment type="caution">
    <text evidence="5">Could be the product of a pseudogene.</text>
</comment>
<comment type="sequence caution" evidence="5">
    <conflict type="miscellaneous discrepancy">
        <sequence resource="EMBL-CDS" id="AAI39842"/>
    </conflict>
    <text>Contaminating sequence.</text>
</comment>
<name>PI4P2_HUMAN</name>
<dbReference type="EMBL" id="CR456378">
    <property type="protein sequence ID" value="CAG30264.1"/>
    <property type="molecule type" value="mRNA"/>
</dbReference>
<dbReference type="EMBL" id="AK126860">
    <property type="protein sequence ID" value="BAC86726.1"/>
    <property type="molecule type" value="mRNA"/>
</dbReference>
<dbReference type="EMBL" id="AP000557">
    <property type="status" value="NOT_ANNOTATED_CDS"/>
    <property type="molecule type" value="Genomic_DNA"/>
</dbReference>
<dbReference type="EMBL" id="BC020225">
    <property type="status" value="NOT_ANNOTATED_CDS"/>
    <property type="molecule type" value="mRNA"/>
</dbReference>
<dbReference type="EMBL" id="BC139841">
    <property type="protein sequence ID" value="AAI39842.2"/>
    <property type="status" value="ALT_SEQ"/>
    <property type="molecule type" value="mRNA"/>
</dbReference>
<dbReference type="SMR" id="A4QPH2"/>
<dbReference type="IntAct" id="A4QPH2">
    <property type="interactions" value="4"/>
</dbReference>
<dbReference type="ChEMBL" id="CHEMBL4105789"/>
<dbReference type="GlyGen" id="A4QPH2">
    <property type="glycosylation" value="1 site, 1 O-linked glycan (1 site)"/>
</dbReference>
<dbReference type="iPTMnet" id="A4QPH2"/>
<dbReference type="PhosphoSitePlus" id="A4QPH2"/>
<dbReference type="BioMuta" id="HGNC:33577"/>
<dbReference type="jPOST" id="A4QPH2"/>
<dbReference type="MassIVE" id="A4QPH2"/>
<dbReference type="PeptideAtlas" id="A4QPH2"/>
<dbReference type="AGR" id="HGNC:33577"/>
<dbReference type="GeneCards" id="PI4KAP2"/>
<dbReference type="HGNC" id="HGNC:33577">
    <property type="gene designation" value="PI4KAP2"/>
</dbReference>
<dbReference type="neXtProt" id="NX_A4QPH2"/>
<dbReference type="InParanoid" id="A4QPH2"/>
<dbReference type="PAN-GO" id="A4QPH2">
    <property type="GO annotations" value="5 GO annotations based on evolutionary models"/>
</dbReference>
<dbReference type="PathwayCommons" id="A4QPH2"/>
<dbReference type="SignaLink" id="A4QPH2"/>
<dbReference type="ChiTaRS" id="PI4KAP2">
    <property type="organism name" value="human"/>
</dbReference>
<dbReference type="Pharos" id="A4QPH2">
    <property type="development level" value="Tchem"/>
</dbReference>
<dbReference type="PRO" id="PR:A4QPH2"/>
<dbReference type="Proteomes" id="UP000005640">
    <property type="component" value="Unplaced"/>
</dbReference>
<dbReference type="RNAct" id="A4QPH2">
    <property type="molecule type" value="protein"/>
</dbReference>
<dbReference type="GO" id="GO:0016301">
    <property type="term" value="F:kinase activity"/>
    <property type="evidence" value="ECO:0007669"/>
    <property type="project" value="UniProtKB-KW"/>
</dbReference>
<dbReference type="GO" id="GO:0046854">
    <property type="term" value="P:phosphatidylinositol phosphate biosynthetic process"/>
    <property type="evidence" value="ECO:0007669"/>
    <property type="project" value="InterPro"/>
</dbReference>
<dbReference type="CDD" id="cd05167">
    <property type="entry name" value="PI4Kc_III_alpha"/>
    <property type="match status" value="1"/>
</dbReference>
<dbReference type="FunFam" id="1.10.1070.11:FF:000005">
    <property type="entry name" value="Phosphatidylinositol 4-kinase, catalytic, alpha"/>
    <property type="match status" value="1"/>
</dbReference>
<dbReference type="FunFam" id="3.30.1010.10:FF:000009">
    <property type="entry name" value="Phosphatidylinositol 4-kinase, catalytic, alpha"/>
    <property type="match status" value="1"/>
</dbReference>
<dbReference type="Gene3D" id="1.10.1070.11">
    <property type="entry name" value="Phosphatidylinositol 3-/4-kinase, catalytic domain"/>
    <property type="match status" value="1"/>
</dbReference>
<dbReference type="Gene3D" id="3.30.1010.10">
    <property type="entry name" value="Phosphatidylinositol 3-kinase Catalytic Subunit, Chain A, domain 4"/>
    <property type="match status" value="2"/>
</dbReference>
<dbReference type="InterPro" id="IPR011009">
    <property type="entry name" value="Kinase-like_dom_sf"/>
</dbReference>
<dbReference type="InterPro" id="IPR000403">
    <property type="entry name" value="PI3/4_kinase_cat_dom"/>
</dbReference>
<dbReference type="InterPro" id="IPR036940">
    <property type="entry name" value="PI3/4_kinase_cat_sf"/>
</dbReference>
<dbReference type="InterPro" id="IPR018936">
    <property type="entry name" value="PI3/4_kinase_CS"/>
</dbReference>
<dbReference type="InterPro" id="IPR045495">
    <property type="entry name" value="PI4K_N"/>
</dbReference>
<dbReference type="InterPro" id="IPR015433">
    <property type="entry name" value="PI_Kinase"/>
</dbReference>
<dbReference type="PANTHER" id="PTHR10048:SF15">
    <property type="entry name" value="PHOSPHATIDYLINOSITOL 4-KINASE ALPHA"/>
    <property type="match status" value="1"/>
</dbReference>
<dbReference type="PANTHER" id="PTHR10048">
    <property type="entry name" value="PHOSPHATIDYLINOSITOL KINASE"/>
    <property type="match status" value="1"/>
</dbReference>
<dbReference type="Pfam" id="PF00454">
    <property type="entry name" value="PI3_PI4_kinase"/>
    <property type="match status" value="1"/>
</dbReference>
<dbReference type="Pfam" id="PF19274">
    <property type="entry name" value="PI4K_N"/>
    <property type="match status" value="1"/>
</dbReference>
<dbReference type="SMART" id="SM00146">
    <property type="entry name" value="PI3Kc"/>
    <property type="match status" value="1"/>
</dbReference>
<dbReference type="SUPFAM" id="SSF56112">
    <property type="entry name" value="Protein kinase-like (PK-like)"/>
    <property type="match status" value="1"/>
</dbReference>
<dbReference type="PROSITE" id="PS00916">
    <property type="entry name" value="PI3_4_KINASE_2"/>
    <property type="match status" value="1"/>
</dbReference>
<dbReference type="PROSITE" id="PS50290">
    <property type="entry name" value="PI3_4_KINASE_3"/>
    <property type="match status" value="1"/>
</dbReference>
<organism>
    <name type="scientific">Homo sapiens</name>
    <name type="common">Human</name>
    <dbReference type="NCBI Taxonomy" id="9606"/>
    <lineage>
        <taxon>Eukaryota</taxon>
        <taxon>Metazoa</taxon>
        <taxon>Chordata</taxon>
        <taxon>Craniata</taxon>
        <taxon>Vertebrata</taxon>
        <taxon>Euteleostomi</taxon>
        <taxon>Mammalia</taxon>
        <taxon>Eutheria</taxon>
        <taxon>Euarchontoglires</taxon>
        <taxon>Primates</taxon>
        <taxon>Haplorrhini</taxon>
        <taxon>Catarrhini</taxon>
        <taxon>Hominidae</taxon>
        <taxon>Homo</taxon>
    </lineage>
</organism>
<sequence length="592" mass="66944">MTVEQKFGLFSAEIKEADPLAASEASQPKPCPPEVTPHYIWIDFLVQRFEIAKYCSSDQVEIFSSLLQRSMSLNIGRAKGSMNRHVAAIGPRFKLLTLGLSLLHADVVPNATIRNVLREKIYSTAFDYFSCPPKFPTQGEKRLREDISIMIKFWTAMFSDKKYLTASQLVPPADIGDLLEQLVEENTGSLSGPAKDFYQRGFDFFNKITNVSAVIKPYPKGDERKKACLSALSEVTVQPGCSLPSNPEAIVLDVDYKSGTPMQSAAKAPYLAKFKVKRCGVSELEKEGLRCRSDSEDECSTQEADGQKISWQAAIFKLGDDCRQKSYWGARMPTDRILRLPASQDMLALQIIDLFKNIFQLVGLDLFVFPYRVVATAPGCGVIECIPDCTSRDQLGRQTDFGMYDYFTRQYGDESTLAFQQARYNFIRSMAAYSLLLFLLQIKDRHNGNIMLDKKGHIIHIDFGFMFESSPGGNLGWEPDIKLTDEMVMIMGGKMEATPFKWFMEMCVQATWLCGEPGPYMDVVVSLVTIMLDTGLPCFRGQTIKLLKHRFSPNMTEREAANFIMKVIQSCFLSNRSRTYNMIQYYQNDIPY</sequence>
<keyword id="KW-0025">Alternative splicing</keyword>
<keyword id="KW-0418">Kinase</keyword>
<keyword id="KW-1185">Reference proteome</keyword>
<keyword id="KW-0808">Transferase</keyword>
<gene>
    <name type="primary">PI4KAP2</name>
</gene>
<reference key="1">
    <citation type="journal article" date="2004" name="Genome Biol.">
        <title>A genome annotation-driven approach to cloning the human ORFeome.</title>
        <authorList>
            <person name="Collins J.E."/>
            <person name="Wright C.L."/>
            <person name="Edwards C.A."/>
            <person name="Davis M.P."/>
            <person name="Grinham J.A."/>
            <person name="Cole C.G."/>
            <person name="Goward M.E."/>
            <person name="Aguado B."/>
            <person name="Mallya M."/>
            <person name="Mokrab Y."/>
            <person name="Huckle E.J."/>
            <person name="Beare D.M."/>
            <person name="Dunham I."/>
        </authorList>
    </citation>
    <scope>NUCLEOTIDE SEQUENCE [LARGE SCALE MRNA] (ISOFORM 1)</scope>
</reference>
<reference key="2">
    <citation type="journal article" date="2004" name="Nat. Genet.">
        <title>Complete sequencing and characterization of 21,243 full-length human cDNAs.</title>
        <authorList>
            <person name="Ota T."/>
            <person name="Suzuki Y."/>
            <person name="Nishikawa T."/>
            <person name="Otsuki T."/>
            <person name="Sugiyama T."/>
            <person name="Irie R."/>
            <person name="Wakamatsu A."/>
            <person name="Hayashi K."/>
            <person name="Sato H."/>
            <person name="Nagai K."/>
            <person name="Kimura K."/>
            <person name="Makita H."/>
            <person name="Sekine M."/>
            <person name="Obayashi M."/>
            <person name="Nishi T."/>
            <person name="Shibahara T."/>
            <person name="Tanaka T."/>
            <person name="Ishii S."/>
            <person name="Yamamoto J."/>
            <person name="Saito K."/>
            <person name="Kawai Y."/>
            <person name="Isono Y."/>
            <person name="Nakamura Y."/>
            <person name="Nagahari K."/>
            <person name="Murakami K."/>
            <person name="Yasuda T."/>
            <person name="Iwayanagi T."/>
            <person name="Wagatsuma M."/>
            <person name="Shiratori A."/>
            <person name="Sudo H."/>
            <person name="Hosoiri T."/>
            <person name="Kaku Y."/>
            <person name="Kodaira H."/>
            <person name="Kondo H."/>
            <person name="Sugawara M."/>
            <person name="Takahashi M."/>
            <person name="Kanda K."/>
            <person name="Yokoi T."/>
            <person name="Furuya T."/>
            <person name="Kikkawa E."/>
            <person name="Omura Y."/>
            <person name="Abe K."/>
            <person name="Kamihara K."/>
            <person name="Katsuta N."/>
            <person name="Sato K."/>
            <person name="Tanikawa M."/>
            <person name="Yamazaki M."/>
            <person name="Ninomiya K."/>
            <person name="Ishibashi T."/>
            <person name="Yamashita H."/>
            <person name="Murakawa K."/>
            <person name="Fujimori K."/>
            <person name="Tanai H."/>
            <person name="Kimata M."/>
            <person name="Watanabe M."/>
            <person name="Hiraoka S."/>
            <person name="Chiba Y."/>
            <person name="Ishida S."/>
            <person name="Ono Y."/>
            <person name="Takiguchi S."/>
            <person name="Watanabe S."/>
            <person name="Yosida M."/>
            <person name="Hotuta T."/>
            <person name="Kusano J."/>
            <person name="Kanehori K."/>
            <person name="Takahashi-Fujii A."/>
            <person name="Hara H."/>
            <person name="Tanase T.-O."/>
            <person name="Nomura Y."/>
            <person name="Togiya S."/>
            <person name="Komai F."/>
            <person name="Hara R."/>
            <person name="Takeuchi K."/>
            <person name="Arita M."/>
            <person name="Imose N."/>
            <person name="Musashino K."/>
            <person name="Yuuki H."/>
            <person name="Oshima A."/>
            <person name="Sasaki N."/>
            <person name="Aotsuka S."/>
            <person name="Yoshikawa Y."/>
            <person name="Matsunawa H."/>
            <person name="Ichihara T."/>
            <person name="Shiohata N."/>
            <person name="Sano S."/>
            <person name="Moriya S."/>
            <person name="Momiyama H."/>
            <person name="Satoh N."/>
            <person name="Takami S."/>
            <person name="Terashima Y."/>
            <person name="Suzuki O."/>
            <person name="Nakagawa S."/>
            <person name="Senoh A."/>
            <person name="Mizoguchi H."/>
            <person name="Goto Y."/>
            <person name="Shimizu F."/>
            <person name="Wakebe H."/>
            <person name="Hishigaki H."/>
            <person name="Watanabe T."/>
            <person name="Sugiyama A."/>
            <person name="Takemoto M."/>
            <person name="Kawakami B."/>
            <person name="Yamazaki M."/>
            <person name="Watanabe K."/>
            <person name="Kumagai A."/>
            <person name="Itakura S."/>
            <person name="Fukuzumi Y."/>
            <person name="Fujimori Y."/>
            <person name="Komiyama M."/>
            <person name="Tashiro H."/>
            <person name="Tanigami A."/>
            <person name="Fujiwara T."/>
            <person name="Ono T."/>
            <person name="Yamada K."/>
            <person name="Fujii Y."/>
            <person name="Ozaki K."/>
            <person name="Hirao M."/>
            <person name="Ohmori Y."/>
            <person name="Kawabata A."/>
            <person name="Hikiji T."/>
            <person name="Kobatake N."/>
            <person name="Inagaki H."/>
            <person name="Ikema Y."/>
            <person name="Okamoto S."/>
            <person name="Okitani R."/>
            <person name="Kawakami T."/>
            <person name="Noguchi S."/>
            <person name="Itoh T."/>
            <person name="Shigeta K."/>
            <person name="Senba T."/>
            <person name="Matsumura K."/>
            <person name="Nakajima Y."/>
            <person name="Mizuno T."/>
            <person name="Morinaga M."/>
            <person name="Sasaki M."/>
            <person name="Togashi T."/>
            <person name="Oyama M."/>
            <person name="Hata H."/>
            <person name="Watanabe M."/>
            <person name="Komatsu T."/>
            <person name="Mizushima-Sugano J."/>
            <person name="Satoh T."/>
            <person name="Shirai Y."/>
            <person name="Takahashi Y."/>
            <person name="Nakagawa K."/>
            <person name="Okumura K."/>
            <person name="Nagase T."/>
            <person name="Nomura N."/>
            <person name="Kikuchi H."/>
            <person name="Masuho Y."/>
            <person name="Yamashita R."/>
            <person name="Nakai K."/>
            <person name="Yada T."/>
            <person name="Nakamura Y."/>
            <person name="Ohara O."/>
            <person name="Isogai T."/>
            <person name="Sugano S."/>
        </authorList>
    </citation>
    <scope>NUCLEOTIDE SEQUENCE [LARGE SCALE MRNA] (ISOFORM 2)</scope>
    <source>
        <tissue>Amygdala</tissue>
    </source>
</reference>
<reference key="3">
    <citation type="journal article" date="1999" name="Nature">
        <title>The DNA sequence of human chromosome 22.</title>
        <authorList>
            <person name="Dunham I."/>
            <person name="Hunt A.R."/>
            <person name="Collins J.E."/>
            <person name="Bruskiewich R."/>
            <person name="Beare D.M."/>
            <person name="Clamp M."/>
            <person name="Smink L.J."/>
            <person name="Ainscough R."/>
            <person name="Almeida J.P."/>
            <person name="Babbage A.K."/>
            <person name="Bagguley C."/>
            <person name="Bailey J."/>
            <person name="Barlow K.F."/>
            <person name="Bates K.N."/>
            <person name="Beasley O.P."/>
            <person name="Bird C.P."/>
            <person name="Blakey S.E."/>
            <person name="Bridgeman A.M."/>
            <person name="Buck D."/>
            <person name="Burgess J."/>
            <person name="Burrill W.D."/>
            <person name="Burton J."/>
            <person name="Carder C."/>
            <person name="Carter N.P."/>
            <person name="Chen Y."/>
            <person name="Clark G."/>
            <person name="Clegg S.M."/>
            <person name="Cobley V.E."/>
            <person name="Cole C.G."/>
            <person name="Collier R.E."/>
            <person name="Connor R."/>
            <person name="Conroy D."/>
            <person name="Corby N.R."/>
            <person name="Coville G.J."/>
            <person name="Cox A.V."/>
            <person name="Davis J."/>
            <person name="Dawson E."/>
            <person name="Dhami P.D."/>
            <person name="Dockree C."/>
            <person name="Dodsworth S.J."/>
            <person name="Durbin R.M."/>
            <person name="Ellington A.G."/>
            <person name="Evans K.L."/>
            <person name="Fey J.M."/>
            <person name="Fleming K."/>
            <person name="French L."/>
            <person name="Garner A.A."/>
            <person name="Gilbert J.G.R."/>
            <person name="Goward M.E."/>
            <person name="Grafham D.V."/>
            <person name="Griffiths M.N.D."/>
            <person name="Hall C."/>
            <person name="Hall R.E."/>
            <person name="Hall-Tamlyn G."/>
            <person name="Heathcott R.W."/>
            <person name="Ho S."/>
            <person name="Holmes S."/>
            <person name="Hunt S.E."/>
            <person name="Jones M.C."/>
            <person name="Kershaw J."/>
            <person name="Kimberley A.M."/>
            <person name="King A."/>
            <person name="Laird G.K."/>
            <person name="Langford C.F."/>
            <person name="Leversha M.A."/>
            <person name="Lloyd C."/>
            <person name="Lloyd D.M."/>
            <person name="Martyn I.D."/>
            <person name="Mashreghi-Mohammadi M."/>
            <person name="Matthews L.H."/>
            <person name="Mccann O.T."/>
            <person name="Mcclay J."/>
            <person name="Mclaren S."/>
            <person name="McMurray A.A."/>
            <person name="Milne S.A."/>
            <person name="Mortimore B.J."/>
            <person name="Odell C.N."/>
            <person name="Pavitt R."/>
            <person name="Pearce A.V."/>
            <person name="Pearson D."/>
            <person name="Phillimore B.J.C.T."/>
            <person name="Phillips S.H."/>
            <person name="Plumb R.W."/>
            <person name="Ramsay H."/>
            <person name="Ramsey Y."/>
            <person name="Rogers L."/>
            <person name="Ross M.T."/>
            <person name="Scott C.E."/>
            <person name="Sehra H.K."/>
            <person name="Skuce C.D."/>
            <person name="Smalley S."/>
            <person name="Smith M.L."/>
            <person name="Soderlund C."/>
            <person name="Spragon L."/>
            <person name="Steward C.A."/>
            <person name="Sulston J.E."/>
            <person name="Swann R.M."/>
            <person name="Vaudin M."/>
            <person name="Wall M."/>
            <person name="Wallis J.M."/>
            <person name="Whiteley M.N."/>
            <person name="Willey D.L."/>
            <person name="Williams L."/>
            <person name="Williams S.A."/>
            <person name="Williamson H."/>
            <person name="Wilmer T.E."/>
            <person name="Wilming L."/>
            <person name="Wright C.L."/>
            <person name="Hubbard T."/>
            <person name="Bentley D.R."/>
            <person name="Beck S."/>
            <person name="Rogers J."/>
            <person name="Shimizu N."/>
            <person name="Minoshima S."/>
            <person name="Kawasaki K."/>
            <person name="Sasaki T."/>
            <person name="Asakawa S."/>
            <person name="Kudoh J."/>
            <person name="Shintani A."/>
            <person name="Shibuya K."/>
            <person name="Yoshizaki Y."/>
            <person name="Aoki N."/>
            <person name="Mitsuyama S."/>
            <person name="Roe B.A."/>
            <person name="Chen F."/>
            <person name="Chu L."/>
            <person name="Crabtree J."/>
            <person name="Deschamps S."/>
            <person name="Do A."/>
            <person name="Do T."/>
            <person name="Dorman A."/>
            <person name="Fang F."/>
            <person name="Fu Y."/>
            <person name="Hu P."/>
            <person name="Hua A."/>
            <person name="Kenton S."/>
            <person name="Lai H."/>
            <person name="Lao H.I."/>
            <person name="Lewis J."/>
            <person name="Lewis S."/>
            <person name="Lin S.-P."/>
            <person name="Loh P."/>
            <person name="Malaj E."/>
            <person name="Nguyen T."/>
            <person name="Pan H."/>
            <person name="Phan S."/>
            <person name="Qi S."/>
            <person name="Qian Y."/>
            <person name="Ray L."/>
            <person name="Ren Q."/>
            <person name="Shaull S."/>
            <person name="Sloan D."/>
            <person name="Song L."/>
            <person name="Wang Q."/>
            <person name="Wang Y."/>
            <person name="Wang Z."/>
            <person name="White J."/>
            <person name="Willingham D."/>
            <person name="Wu H."/>
            <person name="Yao Z."/>
            <person name="Zhan M."/>
            <person name="Zhang G."/>
            <person name="Chissoe S."/>
            <person name="Murray J."/>
            <person name="Miller N."/>
            <person name="Minx P."/>
            <person name="Fulton R."/>
            <person name="Johnson D."/>
            <person name="Bemis G."/>
            <person name="Bentley D."/>
            <person name="Bradshaw H."/>
            <person name="Bourne S."/>
            <person name="Cordes M."/>
            <person name="Du Z."/>
            <person name="Fulton L."/>
            <person name="Goela D."/>
            <person name="Graves T."/>
            <person name="Hawkins J."/>
            <person name="Hinds K."/>
            <person name="Kemp K."/>
            <person name="Latreille P."/>
            <person name="Layman D."/>
            <person name="Ozersky P."/>
            <person name="Rohlfing T."/>
            <person name="Scheet P."/>
            <person name="Walker C."/>
            <person name="Wamsley A."/>
            <person name="Wohldmann P."/>
            <person name="Pepin K."/>
            <person name="Nelson J."/>
            <person name="Korf I."/>
            <person name="Bedell J.A."/>
            <person name="Hillier L.W."/>
            <person name="Mardis E."/>
            <person name="Waterston R."/>
            <person name="Wilson R."/>
            <person name="Emanuel B.S."/>
            <person name="Shaikh T."/>
            <person name="Kurahashi H."/>
            <person name="Saitta S."/>
            <person name="Budarf M.L."/>
            <person name="McDermid H.E."/>
            <person name="Johnson A."/>
            <person name="Wong A.C.C."/>
            <person name="Morrow B.E."/>
            <person name="Edelmann L."/>
            <person name="Kim U.J."/>
            <person name="Shizuya H."/>
            <person name="Simon M.I."/>
            <person name="Dumanski J.P."/>
            <person name="Peyrard M."/>
            <person name="Kedra D."/>
            <person name="Seroussi E."/>
            <person name="Fransson I."/>
            <person name="Tapia I."/>
            <person name="Bruder C.E."/>
            <person name="O'Brien K.P."/>
            <person name="Wilkinson P."/>
            <person name="Bodenteich A."/>
            <person name="Hartman K."/>
            <person name="Hu X."/>
            <person name="Khan A.S."/>
            <person name="Lane L."/>
            <person name="Tilahun Y."/>
            <person name="Wright H."/>
        </authorList>
    </citation>
    <scope>NUCLEOTIDE SEQUENCE [LARGE SCALE GENOMIC DNA]</scope>
</reference>
<reference key="4">
    <citation type="journal article" date="2004" name="Genome Res.">
        <title>The status, quality, and expansion of the NIH full-length cDNA project: the Mammalian Gene Collection (MGC).</title>
        <authorList>
            <consortium name="The MGC Project Team"/>
        </authorList>
    </citation>
    <scope>NUCLEOTIDE SEQUENCE [LARGE SCALE MRNA] (ISOFORMS 1 AND 3)</scope>
    <source>
        <tissue>B-cell</tissue>
    </source>
</reference>
<accession>A4QPH2</accession>
<accession>Q6ICJ0</accession>
<accession>Q6ZT68</accession>
<accession>Q8WUK7</accession>
<evidence type="ECO:0000250" key="1"/>
<evidence type="ECO:0000255" key="2">
    <source>
        <dbReference type="PROSITE-ProRule" id="PRU00269"/>
    </source>
</evidence>
<evidence type="ECO:0000303" key="3">
    <source>
    </source>
</evidence>
<evidence type="ECO:0000303" key="4">
    <source>
    </source>
</evidence>
<evidence type="ECO:0000305" key="5"/>